<gene>
    <name type="ordered locus">Sfri_1505</name>
</gene>
<dbReference type="EC" id="1.7.5.1"/>
<dbReference type="EMBL" id="CP000447">
    <property type="protein sequence ID" value="ABI71356.1"/>
    <property type="molecule type" value="Genomic_DNA"/>
</dbReference>
<dbReference type="EMBL" id="AJ000006">
    <property type="protein sequence ID" value="CAA03851.1"/>
    <property type="molecule type" value="Genomic_DNA"/>
</dbReference>
<dbReference type="RefSeq" id="WP_011636976.1">
    <property type="nucleotide sequence ID" value="NC_008345.1"/>
</dbReference>
<dbReference type="SMR" id="O33732"/>
<dbReference type="STRING" id="318167.Sfri_1505"/>
<dbReference type="KEGG" id="sfr:Sfri_1505"/>
<dbReference type="eggNOG" id="COG0243">
    <property type="taxonomic scope" value="Bacteria"/>
</dbReference>
<dbReference type="HOGENOM" id="CLU_000422_13_4_6"/>
<dbReference type="OrthoDB" id="9810782at2"/>
<dbReference type="UniPathway" id="UPA00653"/>
<dbReference type="Proteomes" id="UP000000684">
    <property type="component" value="Chromosome"/>
</dbReference>
<dbReference type="GO" id="GO:0005737">
    <property type="term" value="C:cytoplasm"/>
    <property type="evidence" value="ECO:0007669"/>
    <property type="project" value="UniProtKB-SubCell"/>
</dbReference>
<dbReference type="GO" id="GO:0016020">
    <property type="term" value="C:membrane"/>
    <property type="evidence" value="ECO:0007669"/>
    <property type="project" value="TreeGrafter"/>
</dbReference>
<dbReference type="GO" id="GO:1990204">
    <property type="term" value="C:oxidoreductase complex"/>
    <property type="evidence" value="ECO:0007669"/>
    <property type="project" value="UniProtKB-ARBA"/>
</dbReference>
<dbReference type="GO" id="GO:0051539">
    <property type="term" value="F:4 iron, 4 sulfur cluster binding"/>
    <property type="evidence" value="ECO:0007669"/>
    <property type="project" value="UniProtKB-KW"/>
</dbReference>
<dbReference type="GO" id="GO:0046872">
    <property type="term" value="F:metal ion binding"/>
    <property type="evidence" value="ECO:0007669"/>
    <property type="project" value="UniProtKB-KW"/>
</dbReference>
<dbReference type="GO" id="GO:0043546">
    <property type="term" value="F:molybdopterin cofactor binding"/>
    <property type="evidence" value="ECO:0007669"/>
    <property type="project" value="InterPro"/>
</dbReference>
<dbReference type="GO" id="GO:0160182">
    <property type="term" value="F:nitrate reductase (quinone) activity"/>
    <property type="evidence" value="ECO:0007669"/>
    <property type="project" value="UniProtKB-EC"/>
</dbReference>
<dbReference type="GO" id="GO:0045333">
    <property type="term" value="P:cellular respiration"/>
    <property type="evidence" value="ECO:0007669"/>
    <property type="project" value="UniProtKB-ARBA"/>
</dbReference>
<dbReference type="GO" id="GO:0042128">
    <property type="term" value="P:nitrate assimilation"/>
    <property type="evidence" value="ECO:0007669"/>
    <property type="project" value="UniProtKB-UniPathway"/>
</dbReference>
<dbReference type="CDD" id="cd02754">
    <property type="entry name" value="MopB_Nitrate-R-NapA-like"/>
    <property type="match status" value="1"/>
</dbReference>
<dbReference type="Gene3D" id="2.40.40.20">
    <property type="match status" value="1"/>
</dbReference>
<dbReference type="Gene3D" id="3.40.50.740">
    <property type="match status" value="1"/>
</dbReference>
<dbReference type="Gene3D" id="2.20.25.90">
    <property type="entry name" value="ADC-like domains"/>
    <property type="match status" value="1"/>
</dbReference>
<dbReference type="Gene3D" id="1.10.10.1100">
    <property type="entry name" value="BFD-like [2Fe-2S]-binding domain"/>
    <property type="match status" value="1"/>
</dbReference>
<dbReference type="Gene3D" id="3.40.228.10">
    <property type="entry name" value="Dimethylsulfoxide Reductase, domain 2"/>
    <property type="match status" value="1"/>
</dbReference>
<dbReference type="InterPro" id="IPR009010">
    <property type="entry name" value="Asp_de-COase-like_dom_sf"/>
</dbReference>
<dbReference type="InterPro" id="IPR041854">
    <property type="entry name" value="BFD-like_2Fe2S-bd_dom_sf"/>
</dbReference>
<dbReference type="InterPro" id="IPR006657">
    <property type="entry name" value="MoPterin_dinucl-bd_dom"/>
</dbReference>
<dbReference type="InterPro" id="IPR006656">
    <property type="entry name" value="Mopterin_OxRdtase"/>
</dbReference>
<dbReference type="InterPro" id="IPR006963">
    <property type="entry name" value="Mopterin_OxRdtase_4Fe-4S_dom"/>
</dbReference>
<dbReference type="InterPro" id="IPR027467">
    <property type="entry name" value="MopterinOxRdtase_cofactor_BS"/>
</dbReference>
<dbReference type="InterPro" id="IPR050123">
    <property type="entry name" value="Prok_molybdopt-oxidoreductase"/>
</dbReference>
<dbReference type="PANTHER" id="PTHR43105:SF9">
    <property type="entry name" value="NADPH-FE(3+) OXIDOREDUCTASE SUBUNIT ALPHA"/>
    <property type="match status" value="1"/>
</dbReference>
<dbReference type="PANTHER" id="PTHR43105">
    <property type="entry name" value="RESPIRATORY NITRATE REDUCTASE"/>
    <property type="match status" value="1"/>
</dbReference>
<dbReference type="Pfam" id="PF04879">
    <property type="entry name" value="Molybdop_Fe4S4"/>
    <property type="match status" value="1"/>
</dbReference>
<dbReference type="Pfam" id="PF00384">
    <property type="entry name" value="Molybdopterin"/>
    <property type="match status" value="1"/>
</dbReference>
<dbReference type="Pfam" id="PF01568">
    <property type="entry name" value="Molydop_binding"/>
    <property type="match status" value="1"/>
</dbReference>
<dbReference type="SMART" id="SM00926">
    <property type="entry name" value="Molybdop_Fe4S4"/>
    <property type="match status" value="1"/>
</dbReference>
<dbReference type="SUPFAM" id="SSF50692">
    <property type="entry name" value="ADC-like"/>
    <property type="match status" value="1"/>
</dbReference>
<dbReference type="SUPFAM" id="SSF53706">
    <property type="entry name" value="Formate dehydrogenase/DMSO reductase, domains 1-3"/>
    <property type="match status" value="1"/>
</dbReference>
<dbReference type="PROSITE" id="PS51669">
    <property type="entry name" value="4FE4S_MOW_BIS_MGD"/>
    <property type="match status" value="1"/>
</dbReference>
<dbReference type="PROSITE" id="PS00551">
    <property type="entry name" value="MOLYBDOPTERIN_PROK_1"/>
    <property type="match status" value="1"/>
</dbReference>
<name>NARB_SHEFN</name>
<proteinExistence type="inferred from homology"/>
<accession>O33732</accession>
<accession>Q084F9</accession>
<comment type="function">
    <text>Nitrate reductase is a key enzyme involved in the first step of nitrate assimilation in plants, fungi and bacteria.</text>
</comment>
<comment type="catalytic activity">
    <reaction>
        <text>nitrate + a quinol = a quinone + nitrite + H2O</text>
        <dbReference type="Rhea" id="RHEA:56144"/>
        <dbReference type="ChEBI" id="CHEBI:15377"/>
        <dbReference type="ChEBI" id="CHEBI:16301"/>
        <dbReference type="ChEBI" id="CHEBI:17632"/>
        <dbReference type="ChEBI" id="CHEBI:24646"/>
        <dbReference type="ChEBI" id="CHEBI:132124"/>
        <dbReference type="EC" id="1.7.5.1"/>
    </reaction>
</comment>
<comment type="cofactor">
    <cofactor evidence="3">
        <name>[4Fe-4S] cluster</name>
        <dbReference type="ChEBI" id="CHEBI:49883"/>
    </cofactor>
    <text evidence="3">Binds 1 [4Fe-4S] cluster.</text>
</comment>
<comment type="cofactor">
    <cofactor evidence="1">
        <name>Mo-bis(molybdopterin guanine dinucleotide)</name>
        <dbReference type="ChEBI" id="CHEBI:60539"/>
    </cofactor>
    <text evidence="1">Binds 1 molybdenum-bis(molybdopterin guanine dinucleotide) (Mo-bis-MGD) cofactor per subunit.</text>
</comment>
<comment type="pathway">
    <text>Nitrogen metabolism; nitrate reduction (assimilation).</text>
</comment>
<comment type="subcellular location">
    <subcellularLocation>
        <location>Cytoplasm</location>
    </subcellularLocation>
</comment>
<comment type="similarity">
    <text evidence="3">Belongs to the prokaryotic molybdopterin-containing oxidoreductase family. NasA/NapA/NarB subfamily.</text>
</comment>
<reference key="1">
    <citation type="submission" date="2006-08" db="EMBL/GenBank/DDBJ databases">
        <title>Complete sequence of Shewanella frigidimarina NCIMB 400.</title>
        <authorList>
            <consortium name="US DOE Joint Genome Institute"/>
            <person name="Copeland A."/>
            <person name="Lucas S."/>
            <person name="Lapidus A."/>
            <person name="Barry K."/>
            <person name="Detter J.C."/>
            <person name="Glavina del Rio T."/>
            <person name="Hammon N."/>
            <person name="Israni S."/>
            <person name="Dalin E."/>
            <person name="Tice H."/>
            <person name="Pitluck S."/>
            <person name="Fredrickson J.K."/>
            <person name="Kolker E."/>
            <person name="McCuel L.A."/>
            <person name="DiChristina T."/>
            <person name="Nealson K.H."/>
            <person name="Newman D."/>
            <person name="Tiedje J.M."/>
            <person name="Zhou J."/>
            <person name="Romine M.F."/>
            <person name="Culley D.E."/>
            <person name="Serres M."/>
            <person name="Chertkov O."/>
            <person name="Brettin T."/>
            <person name="Bruce D."/>
            <person name="Han C."/>
            <person name="Tapia R."/>
            <person name="Gilna P."/>
            <person name="Schmutz J."/>
            <person name="Larimer F."/>
            <person name="Land M."/>
            <person name="Hauser L."/>
            <person name="Kyrpides N."/>
            <person name="Mikhailova N."/>
            <person name="Richardson P."/>
        </authorList>
    </citation>
    <scope>NUCLEOTIDE SEQUENCE [LARGE SCALE GENOMIC DNA]</scope>
    <source>
        <strain>NCIMB 400</strain>
    </source>
</reference>
<reference key="2">
    <citation type="journal article" date="2000" name="Biochem. J.">
        <title>Identification and characterization of a novel cytochrome c3 from Shewanella frigidimarina that is involved in Fe(III) respiration.</title>
        <authorList>
            <person name="Gordon E.H.J."/>
            <person name="Pike A.D."/>
            <person name="Hill A.E."/>
            <person name="Cuthbertson P.M."/>
            <person name="Chapman S.K."/>
            <person name="Reid G.A."/>
        </authorList>
    </citation>
    <scope>NUCLEOTIDE SEQUENCE [GENOMIC DNA] OF 1-397</scope>
</reference>
<protein>
    <recommendedName>
        <fullName>Nitrate reductase</fullName>
        <ecNumber>1.7.5.1</ecNumber>
    </recommendedName>
</protein>
<sequence>MSVVQSSCAYCGVGCGVSVSSNKPNWTDVDAADLILVGDNKHPANYGHLCAKGERLLDSLAQPNVLRYPKLRSGMPLDWDKASTLIADTFAKTIAEHGPDSVALYLSGQLLTEDYYVANKFAKGFLKTANVDTNSRLCMSSAVSAMQRAFGEDVVPGCYDDLEQADVIVLVGANTAWTHPVLFQRILAAIKANNAQLVVIDPLSTATAKQADLHLAIKPGADLTLFHGLLGYLADQNRVDHAYIAAHTEGFDTVVLQAQQLSANLADLATQVGVSVTQLTQFYQLVANNKKVLTASCQGVNQSTIGTDATNAMINCHLALGHIGQAGCGFFSLTGQPNAMGGREVGGLATQLACHMGFSQPEQQLLADFWKVDSIADQKGLVAVEMFDALAEGKIKAIWIMGTNPVVSLPNSEKIAQALADCPFVVVSEISPDSDTAKLADVLLPAQGWSEKCGTVTNSERTITRQRGFITAKGQAKPDWWAVSQVAKKMGFDGFEFDDNASIFSEFAALSAKVKQVFPTKVFDLTGLTELSKAQYDALAPTQWPIASATQIGQQNVRVFGLGEFATATGKAQFVTPAVVSVPQQSLPSNTLLLNTGRSRDQWHTMTRTGHIASLRASIPEPVVHLHSSQLSALSLTEGGLVRIEAIQNQIEQYSTETANPDLFTHASFTMARAVVDDDIPTNMALMSMHWSAQFSLTKGVNQALDARVDPISKQPGFKCQPVTLTPVELALQGVVFGQHYSSAHGLCWQVAQTLENGVCHHIGFTDTDDGFAYQATVHSLKWTLTVVGQPLYIQCNMDKGLLKALKVLSHTQVNVALYQMNDFIGKPVDKQLIKQLHQQIKAGNSPLICACTGVTEANINDEINQQFNDQVMSDGLANISFEQALDSTQLLLGCGRQCGSCHSEVKQCAKQSWKDALSYCESYSDIDHQPSVAEDVA</sequence>
<feature type="chain" id="PRO_0000063236" description="Nitrate reductase">
    <location>
        <begin position="1"/>
        <end position="938"/>
    </location>
</feature>
<feature type="domain" description="4Fe-4S Mo/W bis-MGD-type" evidence="2">
    <location>
        <begin position="1"/>
        <end position="64"/>
    </location>
</feature>
<feature type="binding site" evidence="2">
    <location>
        <position position="8"/>
    </location>
    <ligand>
        <name>[4Fe-4S] cluster</name>
        <dbReference type="ChEBI" id="CHEBI:49883"/>
    </ligand>
</feature>
<feature type="binding site" evidence="2">
    <location>
        <position position="11"/>
    </location>
    <ligand>
        <name>[4Fe-4S] cluster</name>
        <dbReference type="ChEBI" id="CHEBI:49883"/>
    </ligand>
</feature>
<feature type="binding site" evidence="2">
    <location>
        <position position="15"/>
    </location>
    <ligand>
        <name>[4Fe-4S] cluster</name>
        <dbReference type="ChEBI" id="CHEBI:49883"/>
    </ligand>
</feature>
<feature type="binding site" evidence="2">
    <location>
        <position position="50"/>
    </location>
    <ligand>
        <name>[4Fe-4S] cluster</name>
        <dbReference type="ChEBI" id="CHEBI:49883"/>
    </ligand>
</feature>
<keyword id="KW-0004">4Fe-4S</keyword>
<keyword id="KW-0963">Cytoplasm</keyword>
<keyword id="KW-0408">Iron</keyword>
<keyword id="KW-0411">Iron-sulfur</keyword>
<keyword id="KW-0479">Metal-binding</keyword>
<keyword id="KW-0500">Molybdenum</keyword>
<keyword id="KW-0534">Nitrate assimilation</keyword>
<keyword id="KW-0560">Oxidoreductase</keyword>
<keyword id="KW-1185">Reference proteome</keyword>
<organism>
    <name type="scientific">Shewanella frigidimarina (strain NCIMB 400)</name>
    <dbReference type="NCBI Taxonomy" id="318167"/>
    <lineage>
        <taxon>Bacteria</taxon>
        <taxon>Pseudomonadati</taxon>
        <taxon>Pseudomonadota</taxon>
        <taxon>Gammaproteobacteria</taxon>
        <taxon>Alteromonadales</taxon>
        <taxon>Shewanellaceae</taxon>
        <taxon>Shewanella</taxon>
    </lineage>
</organism>
<evidence type="ECO:0000250" key="1"/>
<evidence type="ECO:0000255" key="2">
    <source>
        <dbReference type="PROSITE-ProRule" id="PRU01004"/>
    </source>
</evidence>
<evidence type="ECO:0000305" key="3"/>